<reference key="1">
    <citation type="journal article" date="2005" name="Nucleic Acids Res.">
        <title>The genome sequence of Salmonella enterica serovar Choleraesuis, a highly invasive and resistant zoonotic pathogen.</title>
        <authorList>
            <person name="Chiu C.-H."/>
            <person name="Tang P."/>
            <person name="Chu C."/>
            <person name="Hu S."/>
            <person name="Bao Q."/>
            <person name="Yu J."/>
            <person name="Chou Y.-Y."/>
            <person name="Wang H.-S."/>
            <person name="Lee Y.-S."/>
        </authorList>
    </citation>
    <scope>NUCLEOTIDE SEQUENCE [LARGE SCALE GENOMIC DNA]</scope>
    <source>
        <strain>SC-B67</strain>
    </source>
</reference>
<sequence>MELLLLSNSTLPGKAWLEHALPLIANQLNGRRSAVFIPFAGVTQTWDEYTDKTAEVLAPLGVNVTGIHRVADPLAAIEKAEIIIVGGGNTFQLLKESRERGLLAPMADRVKRGALYIGWSAGANLACPAIRTTNDMPIVDPNGFDALDLFPLQINPHFTNALPEGHKGETREQRIRELLVVAPELTVIGLPEGNWIQVSNGQAVLGGPNTTWVFKAGEEAVALEAGHRF</sequence>
<gene>
    <name evidence="1" type="primary">pepE</name>
    <name type="ordered locus">SCH_4069</name>
</gene>
<name>PEPE_SALCH</name>
<feature type="chain" id="PRO_0000258595" description="Peptidase E">
    <location>
        <begin position="1"/>
        <end position="229"/>
    </location>
</feature>
<feature type="active site" description="Charge relay system" evidence="1">
    <location>
        <position position="120"/>
    </location>
</feature>
<feature type="active site" description="Charge relay system" evidence="1">
    <location>
        <position position="135"/>
    </location>
</feature>
<feature type="active site" description="Charge relay system" evidence="1">
    <location>
        <position position="157"/>
    </location>
</feature>
<evidence type="ECO:0000255" key="1">
    <source>
        <dbReference type="HAMAP-Rule" id="MF_00510"/>
    </source>
</evidence>
<protein>
    <recommendedName>
        <fullName evidence="1">Peptidase E</fullName>
        <ecNumber evidence="1">3.4.13.21</ecNumber>
    </recommendedName>
    <alternativeName>
        <fullName evidence="1">Alpha-aspartyl dipeptidase</fullName>
    </alternativeName>
    <alternativeName>
        <fullName evidence="1">Asp-specific dipeptidase</fullName>
    </alternativeName>
    <alternativeName>
        <fullName evidence="1">Dipeptidase E</fullName>
    </alternativeName>
</protein>
<dbReference type="EC" id="3.4.13.21" evidence="1"/>
<dbReference type="EMBL" id="AE017220">
    <property type="protein sequence ID" value="AAX67975.1"/>
    <property type="molecule type" value="Genomic_DNA"/>
</dbReference>
<dbReference type="RefSeq" id="WP_000421790.1">
    <property type="nucleotide sequence ID" value="NC_006905.1"/>
</dbReference>
<dbReference type="SMR" id="Q57H37"/>
<dbReference type="MEROPS" id="S51.001"/>
<dbReference type="KEGG" id="sec:SCH_4069"/>
<dbReference type="HOGENOM" id="CLU_071689_0_0_6"/>
<dbReference type="Proteomes" id="UP000000538">
    <property type="component" value="Chromosome"/>
</dbReference>
<dbReference type="GO" id="GO:0005737">
    <property type="term" value="C:cytoplasm"/>
    <property type="evidence" value="ECO:0007669"/>
    <property type="project" value="UniProtKB-SubCell"/>
</dbReference>
<dbReference type="GO" id="GO:0016805">
    <property type="term" value="F:dipeptidase activity"/>
    <property type="evidence" value="ECO:0007669"/>
    <property type="project" value="UniProtKB-UniRule"/>
</dbReference>
<dbReference type="GO" id="GO:0008236">
    <property type="term" value="F:serine-type peptidase activity"/>
    <property type="evidence" value="ECO:0007669"/>
    <property type="project" value="UniProtKB-KW"/>
</dbReference>
<dbReference type="GO" id="GO:0006508">
    <property type="term" value="P:proteolysis"/>
    <property type="evidence" value="ECO:0007669"/>
    <property type="project" value="UniProtKB-UniRule"/>
</dbReference>
<dbReference type="CDD" id="cd03146">
    <property type="entry name" value="GAT1_Peptidase_E"/>
    <property type="match status" value="1"/>
</dbReference>
<dbReference type="FunFam" id="3.40.50.880:FF:000007">
    <property type="entry name" value="Peptidase E"/>
    <property type="match status" value="1"/>
</dbReference>
<dbReference type="Gene3D" id="3.40.50.880">
    <property type="match status" value="1"/>
</dbReference>
<dbReference type="HAMAP" id="MF_00510">
    <property type="entry name" value="Peptidase_E"/>
    <property type="match status" value="1"/>
</dbReference>
<dbReference type="InterPro" id="IPR029062">
    <property type="entry name" value="Class_I_gatase-like"/>
</dbReference>
<dbReference type="InterPro" id="IPR005320">
    <property type="entry name" value="Peptidase_S51"/>
</dbReference>
<dbReference type="InterPro" id="IPR023172">
    <property type="entry name" value="Peptidase_S51_dipeptidase-E"/>
</dbReference>
<dbReference type="NCBIfam" id="NF003642">
    <property type="entry name" value="PRK05282.1"/>
    <property type="match status" value="1"/>
</dbReference>
<dbReference type="PANTHER" id="PTHR20842:SF0">
    <property type="entry name" value="ALPHA-ASPARTYL DIPEPTIDASE"/>
    <property type="match status" value="1"/>
</dbReference>
<dbReference type="PANTHER" id="PTHR20842">
    <property type="entry name" value="PROTEASE S51 ALPHA-ASPARTYL DIPEPTIDASE"/>
    <property type="match status" value="1"/>
</dbReference>
<dbReference type="Pfam" id="PF03575">
    <property type="entry name" value="Peptidase_S51"/>
    <property type="match status" value="1"/>
</dbReference>
<dbReference type="SUPFAM" id="SSF52317">
    <property type="entry name" value="Class I glutamine amidotransferase-like"/>
    <property type="match status" value="1"/>
</dbReference>
<organism>
    <name type="scientific">Salmonella choleraesuis (strain SC-B67)</name>
    <dbReference type="NCBI Taxonomy" id="321314"/>
    <lineage>
        <taxon>Bacteria</taxon>
        <taxon>Pseudomonadati</taxon>
        <taxon>Pseudomonadota</taxon>
        <taxon>Gammaproteobacteria</taxon>
        <taxon>Enterobacterales</taxon>
        <taxon>Enterobacteriaceae</taxon>
        <taxon>Salmonella</taxon>
    </lineage>
</organism>
<accession>Q57H37</accession>
<comment type="function">
    <text evidence="1">Hydrolyzes dipeptides containing N-terminal aspartate residues. May play a role in allowing the cell to use peptide aspartate to spare carbon otherwise required for the synthesis of the aspartate family of amino acids.</text>
</comment>
<comment type="catalytic activity">
    <reaction evidence="1">
        <text>Dipeptidase E catalyzes the hydrolysis of dipeptides Asp-|-Xaa. It does not act on peptides with N-terminal Glu, Asn or Gln, nor does it cleave isoaspartyl peptides.</text>
        <dbReference type="EC" id="3.4.13.21"/>
    </reaction>
</comment>
<comment type="subcellular location">
    <subcellularLocation>
        <location evidence="1">Cytoplasm</location>
    </subcellularLocation>
</comment>
<comment type="similarity">
    <text evidence="1">Belongs to the peptidase S51 family.</text>
</comment>
<proteinExistence type="inferred from homology"/>
<keyword id="KW-0963">Cytoplasm</keyword>
<keyword id="KW-0224">Dipeptidase</keyword>
<keyword id="KW-0378">Hydrolase</keyword>
<keyword id="KW-0645">Protease</keyword>
<keyword id="KW-0720">Serine protease</keyword>